<evidence type="ECO:0000255" key="1">
    <source>
        <dbReference type="HAMAP-Rule" id="MF_01581"/>
    </source>
</evidence>
<keyword id="KW-0732">Signal</keyword>
<sequence>MNNTLSKRLCLTAMLTLAAVVYTTSAFAETSKLVIESGDSAQSRQEAAMEKEQWNDTRSLRQKVNTRAEKEWDKADAAFDNRDKCEQSANINAYWEPNTLRCLDRRTGRVITP</sequence>
<proteinExistence type="inferred from homology"/>
<feature type="signal peptide" evidence="1">
    <location>
        <begin position="1"/>
        <end position="28"/>
    </location>
</feature>
<feature type="chain" id="PRO_1000201007" description="UPF0482 protein YnfB">
    <location>
        <begin position="29"/>
        <end position="113"/>
    </location>
</feature>
<name>YNFB_SALHS</name>
<organism>
    <name type="scientific">Salmonella heidelberg (strain SL476)</name>
    <dbReference type="NCBI Taxonomy" id="454169"/>
    <lineage>
        <taxon>Bacteria</taxon>
        <taxon>Pseudomonadati</taxon>
        <taxon>Pseudomonadota</taxon>
        <taxon>Gammaproteobacteria</taxon>
        <taxon>Enterobacterales</taxon>
        <taxon>Enterobacteriaceae</taxon>
        <taxon>Salmonella</taxon>
    </lineage>
</organism>
<gene>
    <name evidence="1" type="primary">ynfB</name>
    <name type="ordered locus">SeHA_C1673</name>
</gene>
<protein>
    <recommendedName>
        <fullName evidence="1">UPF0482 protein YnfB</fullName>
    </recommendedName>
</protein>
<dbReference type="EMBL" id="CP001120">
    <property type="protein sequence ID" value="ACF67930.1"/>
    <property type="molecule type" value="Genomic_DNA"/>
</dbReference>
<dbReference type="RefSeq" id="WP_001066440.1">
    <property type="nucleotide sequence ID" value="NC_011083.1"/>
</dbReference>
<dbReference type="KEGG" id="seh:SeHA_C1673"/>
<dbReference type="HOGENOM" id="CLU_167574_0_0_6"/>
<dbReference type="Proteomes" id="UP000001866">
    <property type="component" value="Chromosome"/>
</dbReference>
<dbReference type="HAMAP" id="MF_01581">
    <property type="entry name" value="UPF0482"/>
    <property type="match status" value="1"/>
</dbReference>
<dbReference type="InterPro" id="IPR009700">
    <property type="entry name" value="DUF1283"/>
</dbReference>
<dbReference type="NCBIfam" id="NF010180">
    <property type="entry name" value="PRK13659.1"/>
    <property type="match status" value="1"/>
</dbReference>
<dbReference type="Pfam" id="PF06932">
    <property type="entry name" value="DUF1283"/>
    <property type="match status" value="1"/>
</dbReference>
<accession>B4THT5</accession>
<comment type="similarity">
    <text evidence="1">Belongs to the UPF0482 family.</text>
</comment>
<reference key="1">
    <citation type="journal article" date="2011" name="J. Bacteriol.">
        <title>Comparative genomics of 28 Salmonella enterica isolates: evidence for CRISPR-mediated adaptive sublineage evolution.</title>
        <authorList>
            <person name="Fricke W.F."/>
            <person name="Mammel M.K."/>
            <person name="McDermott P.F."/>
            <person name="Tartera C."/>
            <person name="White D.G."/>
            <person name="Leclerc J.E."/>
            <person name="Ravel J."/>
            <person name="Cebula T.A."/>
        </authorList>
    </citation>
    <scope>NUCLEOTIDE SEQUENCE [LARGE SCALE GENOMIC DNA]</scope>
    <source>
        <strain>SL476</strain>
    </source>
</reference>